<proteinExistence type="evidence at transcript level"/>
<feature type="chain" id="PRO_0000123792" description="Auxin efflux carrier component 3a">
    <location>
        <begin position="1"/>
        <end position="618"/>
    </location>
</feature>
<feature type="topological domain" description="Extracellular" evidence="11">
    <location>
        <begin position="1"/>
        <end position="6"/>
    </location>
</feature>
<feature type="transmembrane region" description="Helical; Name=1" evidence="3">
    <location>
        <begin position="7"/>
        <end position="27"/>
    </location>
</feature>
<feature type="topological domain" description="Cytoplasmic" evidence="11">
    <location>
        <begin position="28"/>
        <end position="38"/>
    </location>
</feature>
<feature type="transmembrane region" description="Helical; Name=2" evidence="3">
    <location>
        <begin position="39"/>
        <end position="59"/>
    </location>
</feature>
<feature type="topological domain" description="Extracellular" evidence="11">
    <location>
        <begin position="60"/>
        <end position="70"/>
    </location>
</feature>
<feature type="transmembrane region" description="Helical; Name=3" evidence="3">
    <location>
        <begin position="71"/>
        <end position="90"/>
    </location>
</feature>
<feature type="topological domain" description="Cytoplasmic" evidence="11">
    <location>
        <begin position="91"/>
        <end position="104"/>
    </location>
</feature>
<feature type="transmembrane region" description="Helical; Name=4" evidence="3">
    <location>
        <begin position="105"/>
        <end position="125"/>
    </location>
</feature>
<feature type="topological domain" description="Extracellular" evidence="11">
    <location>
        <begin position="126"/>
        <end position="134"/>
    </location>
</feature>
<feature type="transmembrane region" description="Helical; Name=5" evidence="3">
    <location>
        <begin position="135"/>
        <end position="155"/>
    </location>
</feature>
<feature type="topological domain" description="Cytoplasmic" evidence="11">
    <location>
        <begin position="156"/>
        <end position="478"/>
    </location>
</feature>
<feature type="transmembrane region" description="Helical; Name=6" evidence="3">
    <location>
        <begin position="479"/>
        <end position="499"/>
    </location>
</feature>
<feature type="topological domain" description="Extracellular" evidence="11">
    <location>
        <begin position="500"/>
        <end position="502"/>
    </location>
</feature>
<feature type="transmembrane region" description="Helical; Name=7" evidence="3">
    <location>
        <begin position="503"/>
        <end position="523"/>
    </location>
</feature>
<feature type="topological domain" description="Cytoplasmic" evidence="11">
    <location>
        <begin position="524"/>
        <end position="539"/>
    </location>
</feature>
<feature type="transmembrane region" description="Helical; Name=8" evidence="3">
    <location>
        <begin position="540"/>
        <end position="560"/>
    </location>
</feature>
<feature type="topological domain" description="Extracellular" evidence="11">
    <location>
        <begin position="561"/>
        <end position="563"/>
    </location>
</feature>
<feature type="transmembrane region" description="Helical; Name=9" evidence="3">
    <location>
        <begin position="564"/>
        <end position="584"/>
    </location>
</feature>
<feature type="topological domain" description="Cytoplasmic" evidence="11">
    <location>
        <begin position="585"/>
        <end position="597"/>
    </location>
</feature>
<feature type="transmembrane region" description="Helical; Name=10" evidence="3">
    <location>
        <begin position="598"/>
        <end position="618"/>
    </location>
</feature>
<feature type="region of interest" description="Disordered" evidence="4">
    <location>
        <begin position="281"/>
        <end position="312"/>
    </location>
</feature>
<feature type="compositionally biased region" description="Polar residues" evidence="4">
    <location>
        <begin position="281"/>
        <end position="293"/>
    </location>
</feature>
<feature type="binding site" evidence="2">
    <location>
        <position position="51"/>
    </location>
    <ligand>
        <name>(indol-3-yl)acetate</name>
        <dbReference type="ChEBI" id="CHEBI:30854"/>
    </ligand>
</feature>
<feature type="binding site" evidence="2">
    <location>
        <position position="115"/>
    </location>
    <ligand>
        <name>(indol-3-yl)acetate</name>
        <dbReference type="ChEBI" id="CHEBI:30854"/>
    </ligand>
</feature>
<feature type="binding site" evidence="2">
    <location>
        <position position="117"/>
    </location>
    <ligand>
        <name>(indol-3-yl)acetate</name>
        <dbReference type="ChEBI" id="CHEBI:30854"/>
    </ligand>
</feature>
<feature type="binding site" evidence="2">
    <location>
        <position position="148"/>
    </location>
    <ligand>
        <name>(indol-3-yl)acetate</name>
        <dbReference type="ChEBI" id="CHEBI:30854"/>
    </ligand>
</feature>
<feature type="binding site" evidence="2">
    <location>
        <position position="578"/>
    </location>
    <ligand>
        <name>(indol-3-yl)acetate</name>
        <dbReference type="ChEBI" id="CHEBI:30854"/>
    </ligand>
</feature>
<feature type="binding site" evidence="2">
    <location>
        <position position="579"/>
    </location>
    <ligand>
        <name>(indol-3-yl)acetate</name>
        <dbReference type="ChEBI" id="CHEBI:30854"/>
    </ligand>
</feature>
<feature type="splice variant" id="VSP_017010" description="In isoform 2." evidence="7">
    <location>
        <begin position="394"/>
        <end position="422"/>
    </location>
</feature>
<feature type="sequence conflict" description="In Ref. 6; AK101504." evidence="11" ref="6">
    <original>L</original>
    <variation>H</variation>
    <location>
        <position position="154"/>
    </location>
</feature>
<feature type="sequence conflict" description="In Ref. 6; AK101504." evidence="11" ref="6">
    <original>S</original>
    <variation>Y</variation>
    <location>
        <position position="330"/>
    </location>
</feature>
<feature type="sequence conflict" description="In Ref. 6; AK063976." evidence="11" ref="6">
    <location>
        <position position="348"/>
    </location>
</feature>
<name>PIN3A_ORYSJ</name>
<reference key="1">
    <citation type="journal article" date="2002" name="Nature">
        <title>The genome sequence and structure of rice chromosome 1.</title>
        <authorList>
            <person name="Sasaki T."/>
            <person name="Matsumoto T."/>
            <person name="Yamamoto K."/>
            <person name="Sakata K."/>
            <person name="Baba T."/>
            <person name="Katayose Y."/>
            <person name="Wu J."/>
            <person name="Niimura Y."/>
            <person name="Cheng Z."/>
            <person name="Nagamura Y."/>
            <person name="Antonio B.A."/>
            <person name="Kanamori H."/>
            <person name="Hosokawa S."/>
            <person name="Masukawa M."/>
            <person name="Arikawa K."/>
            <person name="Chiden Y."/>
            <person name="Hayashi M."/>
            <person name="Okamoto M."/>
            <person name="Ando T."/>
            <person name="Aoki H."/>
            <person name="Arita K."/>
            <person name="Hamada M."/>
            <person name="Harada C."/>
            <person name="Hijishita S."/>
            <person name="Honda M."/>
            <person name="Ichikawa Y."/>
            <person name="Idonuma A."/>
            <person name="Iijima M."/>
            <person name="Ikeda M."/>
            <person name="Ikeno M."/>
            <person name="Ito S."/>
            <person name="Ito T."/>
            <person name="Ito Y."/>
            <person name="Ito Y."/>
            <person name="Iwabuchi A."/>
            <person name="Kamiya K."/>
            <person name="Karasawa W."/>
            <person name="Katagiri S."/>
            <person name="Kikuta A."/>
            <person name="Kobayashi N."/>
            <person name="Kono I."/>
            <person name="Machita K."/>
            <person name="Maehara T."/>
            <person name="Mizuno H."/>
            <person name="Mizubayashi T."/>
            <person name="Mukai Y."/>
            <person name="Nagasaki H."/>
            <person name="Nakashima M."/>
            <person name="Nakama Y."/>
            <person name="Nakamichi Y."/>
            <person name="Nakamura M."/>
            <person name="Namiki N."/>
            <person name="Negishi M."/>
            <person name="Ohta I."/>
            <person name="Ono N."/>
            <person name="Saji S."/>
            <person name="Sakai K."/>
            <person name="Shibata M."/>
            <person name="Shimokawa T."/>
            <person name="Shomura A."/>
            <person name="Song J."/>
            <person name="Takazaki Y."/>
            <person name="Terasawa K."/>
            <person name="Tsuji K."/>
            <person name="Waki K."/>
            <person name="Yamagata H."/>
            <person name="Yamane H."/>
            <person name="Yoshiki S."/>
            <person name="Yoshihara R."/>
            <person name="Yukawa K."/>
            <person name="Zhong H."/>
            <person name="Iwama H."/>
            <person name="Endo T."/>
            <person name="Ito H."/>
            <person name="Hahn J.H."/>
            <person name="Kim H.-I."/>
            <person name="Eun M.-Y."/>
            <person name="Yano M."/>
            <person name="Jiang J."/>
            <person name="Gojobori T."/>
        </authorList>
    </citation>
    <scope>NUCLEOTIDE SEQUENCE [LARGE SCALE GENOMIC DNA]</scope>
    <source>
        <strain>cv. Nipponbare</strain>
    </source>
</reference>
<reference key="2">
    <citation type="journal article" date="2005" name="Nature">
        <title>The map-based sequence of the rice genome.</title>
        <authorList>
            <consortium name="International rice genome sequencing project (IRGSP)"/>
        </authorList>
    </citation>
    <scope>NUCLEOTIDE SEQUENCE [LARGE SCALE GENOMIC DNA]</scope>
    <source>
        <strain>cv. Nipponbare</strain>
    </source>
</reference>
<reference key="3">
    <citation type="journal article" date="2008" name="Nucleic Acids Res.">
        <title>The rice annotation project database (RAP-DB): 2008 update.</title>
        <authorList>
            <consortium name="The rice annotation project (RAP)"/>
        </authorList>
    </citation>
    <scope>GENOME REANNOTATION</scope>
    <source>
        <strain>cv. Nipponbare</strain>
    </source>
</reference>
<reference key="4">
    <citation type="journal article" date="2013" name="Rice">
        <title>Improvement of the Oryza sativa Nipponbare reference genome using next generation sequence and optical map data.</title>
        <authorList>
            <person name="Kawahara Y."/>
            <person name="de la Bastide M."/>
            <person name="Hamilton J.P."/>
            <person name="Kanamori H."/>
            <person name="McCombie W.R."/>
            <person name="Ouyang S."/>
            <person name="Schwartz D.C."/>
            <person name="Tanaka T."/>
            <person name="Wu J."/>
            <person name="Zhou S."/>
            <person name="Childs K.L."/>
            <person name="Davidson R.M."/>
            <person name="Lin H."/>
            <person name="Quesada-Ocampo L."/>
            <person name="Vaillancourt B."/>
            <person name="Sakai H."/>
            <person name="Lee S.S."/>
            <person name="Kim J."/>
            <person name="Numa H."/>
            <person name="Itoh T."/>
            <person name="Buell C.R."/>
            <person name="Matsumoto T."/>
        </authorList>
    </citation>
    <scope>GENOME REANNOTATION</scope>
    <source>
        <strain>cv. Nipponbare</strain>
    </source>
</reference>
<reference key="5">
    <citation type="journal article" date="2005" name="PLoS Biol.">
        <title>The genomes of Oryza sativa: a history of duplications.</title>
        <authorList>
            <person name="Yu J."/>
            <person name="Wang J."/>
            <person name="Lin W."/>
            <person name="Li S."/>
            <person name="Li H."/>
            <person name="Zhou J."/>
            <person name="Ni P."/>
            <person name="Dong W."/>
            <person name="Hu S."/>
            <person name="Zeng C."/>
            <person name="Zhang J."/>
            <person name="Zhang Y."/>
            <person name="Li R."/>
            <person name="Xu Z."/>
            <person name="Li S."/>
            <person name="Li X."/>
            <person name="Zheng H."/>
            <person name="Cong L."/>
            <person name="Lin L."/>
            <person name="Yin J."/>
            <person name="Geng J."/>
            <person name="Li G."/>
            <person name="Shi J."/>
            <person name="Liu J."/>
            <person name="Lv H."/>
            <person name="Li J."/>
            <person name="Wang J."/>
            <person name="Deng Y."/>
            <person name="Ran L."/>
            <person name="Shi X."/>
            <person name="Wang X."/>
            <person name="Wu Q."/>
            <person name="Li C."/>
            <person name="Ren X."/>
            <person name="Wang J."/>
            <person name="Wang X."/>
            <person name="Li D."/>
            <person name="Liu D."/>
            <person name="Zhang X."/>
            <person name="Ji Z."/>
            <person name="Zhao W."/>
            <person name="Sun Y."/>
            <person name="Zhang Z."/>
            <person name="Bao J."/>
            <person name="Han Y."/>
            <person name="Dong L."/>
            <person name="Ji J."/>
            <person name="Chen P."/>
            <person name="Wu S."/>
            <person name="Liu J."/>
            <person name="Xiao Y."/>
            <person name="Bu D."/>
            <person name="Tan J."/>
            <person name="Yang L."/>
            <person name="Ye C."/>
            <person name="Zhang J."/>
            <person name="Xu J."/>
            <person name="Zhou Y."/>
            <person name="Yu Y."/>
            <person name="Zhang B."/>
            <person name="Zhuang S."/>
            <person name="Wei H."/>
            <person name="Liu B."/>
            <person name="Lei M."/>
            <person name="Yu H."/>
            <person name="Li Y."/>
            <person name="Xu H."/>
            <person name="Wei S."/>
            <person name="He X."/>
            <person name="Fang L."/>
            <person name="Zhang Z."/>
            <person name="Zhang Y."/>
            <person name="Huang X."/>
            <person name="Su Z."/>
            <person name="Tong W."/>
            <person name="Li J."/>
            <person name="Tong Z."/>
            <person name="Li S."/>
            <person name="Ye J."/>
            <person name="Wang L."/>
            <person name="Fang L."/>
            <person name="Lei T."/>
            <person name="Chen C.-S."/>
            <person name="Chen H.-C."/>
            <person name="Xu Z."/>
            <person name="Li H."/>
            <person name="Huang H."/>
            <person name="Zhang F."/>
            <person name="Xu H."/>
            <person name="Li N."/>
            <person name="Zhao C."/>
            <person name="Li S."/>
            <person name="Dong L."/>
            <person name="Huang Y."/>
            <person name="Li L."/>
            <person name="Xi Y."/>
            <person name="Qi Q."/>
            <person name="Li W."/>
            <person name="Zhang B."/>
            <person name="Hu W."/>
            <person name="Zhang Y."/>
            <person name="Tian X."/>
            <person name="Jiao Y."/>
            <person name="Liang X."/>
            <person name="Jin J."/>
            <person name="Gao L."/>
            <person name="Zheng W."/>
            <person name="Hao B."/>
            <person name="Liu S.-M."/>
            <person name="Wang W."/>
            <person name="Yuan L."/>
            <person name="Cao M."/>
            <person name="McDermott J."/>
            <person name="Samudrala R."/>
            <person name="Wang J."/>
            <person name="Wong G.K.-S."/>
            <person name="Yang H."/>
        </authorList>
    </citation>
    <scope>NUCLEOTIDE SEQUENCE [LARGE SCALE GENOMIC DNA]</scope>
    <source>
        <strain>cv. Nipponbare</strain>
    </source>
</reference>
<reference key="6">
    <citation type="journal article" date="2003" name="Science">
        <title>Collection, mapping, and annotation of over 28,000 cDNA clones from japonica rice.</title>
        <authorList>
            <consortium name="The rice full-length cDNA consortium"/>
        </authorList>
    </citation>
    <scope>NUCLEOTIDE SEQUENCE [LARGE SCALE MRNA] (ISOFORMS 1 AND 2)</scope>
    <source>
        <strain>cv. Nipponbare</strain>
    </source>
</reference>
<reference key="7">
    <citation type="journal article" date="2010" name="Plant Sci.">
        <title>Identification and expression analysis of PIN genes in rice.</title>
        <authorList>
            <person name="Miyashita Y."/>
            <person name="Takasugi T."/>
            <person name="Ito Y."/>
        </authorList>
    </citation>
    <scope>IDENTIFICATION</scope>
</reference>
<reference key="8">
    <citation type="journal article" date="2005" name="Plant Cell Physiol.">
        <title>A PIN1 family gene, OsPIN1, involved in auxin-dependent adventitious root emergence and tillering in rice.</title>
        <authorList>
            <person name="Xu M."/>
            <person name="Zhu L."/>
            <person name="Shou H."/>
            <person name="Wu P."/>
        </authorList>
    </citation>
    <scope>NOMENCLATURE</scope>
</reference>
<reference key="9">
    <citation type="journal article" date="2009" name="Mol. Plant">
        <title>Expression of PIN genes in rice (Oryza sativa L.): tissue specificity and regulation by hormones.</title>
        <authorList>
            <person name="Wang J.R."/>
            <person name="Hu H."/>
            <person name="Wang G.H."/>
            <person name="Li J."/>
            <person name="Chen J.Y."/>
            <person name="Wu P."/>
        </authorList>
    </citation>
    <scope>TISSUE SPECIFICITY</scope>
</reference>
<reference key="10">
    <citation type="journal article" date="2012" name="Plant J.">
        <title>The putative auxin efflux carrier OsPIN3t is involved in the drought stress response and drought tolerance.</title>
        <authorList>
            <person name="Zhang Q."/>
            <person name="Li J."/>
            <person name="Zhang W."/>
            <person name="Yan S."/>
            <person name="Wang R."/>
            <person name="Zhao J."/>
            <person name="Li Y."/>
            <person name="Qi Z."/>
            <person name="Sun Z."/>
            <person name="Zhu Z."/>
        </authorList>
    </citation>
    <scope>FUNCTION</scope>
    <scope>SUBCELLULAR LOCATION</scope>
    <scope>TISSUE SPECIFICITY</scope>
    <scope>INDUCTION</scope>
</reference>
<dbReference type="EMBL" id="AP003725">
    <property type="protein sequence ID" value="BAD68753.1"/>
    <property type="molecule type" value="Genomic_DNA"/>
</dbReference>
<dbReference type="EMBL" id="AP003725">
    <property type="protein sequence ID" value="BAD68754.1"/>
    <property type="molecule type" value="Genomic_DNA"/>
</dbReference>
<dbReference type="EMBL" id="AP008207">
    <property type="protein sequence ID" value="BAF05606.1"/>
    <property type="molecule type" value="Genomic_DNA"/>
</dbReference>
<dbReference type="EMBL" id="AP014957">
    <property type="protein sequence ID" value="BAS73380.1"/>
    <property type="molecule type" value="Genomic_DNA"/>
</dbReference>
<dbReference type="EMBL" id="AP014957">
    <property type="protein sequence ID" value="BAS73381.1"/>
    <property type="molecule type" value="Genomic_DNA"/>
</dbReference>
<dbReference type="EMBL" id="CM000138">
    <property type="protein sequence ID" value="EEE55070.1"/>
    <property type="molecule type" value="Genomic_DNA"/>
</dbReference>
<dbReference type="EMBL" id="AK063976">
    <property type="status" value="NOT_ANNOTATED_CDS"/>
    <property type="molecule type" value="mRNA"/>
</dbReference>
<dbReference type="EMBL" id="AK101504">
    <property type="status" value="NOT_ANNOTATED_CDS"/>
    <property type="molecule type" value="mRNA"/>
</dbReference>
<dbReference type="EMBL" id="BR000832">
    <property type="protein sequence ID" value="FAA00681.1"/>
    <property type="molecule type" value="Genomic_DNA"/>
</dbReference>
<dbReference type="RefSeq" id="XP_015625677.1">
    <property type="nucleotide sequence ID" value="XM_015770191.1"/>
</dbReference>
<dbReference type="SMR" id="Q5VP70"/>
<dbReference type="FunCoup" id="Q5VP70">
    <property type="interactions" value="10"/>
</dbReference>
<dbReference type="STRING" id="39947.Q5VP70"/>
<dbReference type="GlyCosmos" id="Q5VP70">
    <property type="glycosylation" value="3 sites, No reported glycans"/>
</dbReference>
<dbReference type="PaxDb" id="39947-Q5VP70"/>
<dbReference type="EnsemblPlants" id="Os01t0643300-01">
    <molecule id="Q5VP70-1"/>
    <property type="protein sequence ID" value="Os01t0643300-01"/>
    <property type="gene ID" value="Os01g0643300"/>
</dbReference>
<dbReference type="Gramene" id="Os01t0643300-01">
    <molecule id="Q5VP70-1"/>
    <property type="protein sequence ID" value="Os01t0643300-01"/>
    <property type="gene ID" value="Os01g0643300"/>
</dbReference>
<dbReference type="KEGG" id="dosa:Os01g0643300"/>
<dbReference type="eggNOG" id="ENOG502QRM7">
    <property type="taxonomic scope" value="Eukaryota"/>
</dbReference>
<dbReference type="InParanoid" id="Q5VP70"/>
<dbReference type="OMA" id="MISWKDF"/>
<dbReference type="OrthoDB" id="1868374at2759"/>
<dbReference type="PlantReactome" id="R-OSA-5608118">
    <property type="pathway name" value="Auxin signalling"/>
</dbReference>
<dbReference type="PlantReactome" id="R-OSA-8858053">
    <property type="pathway name" value="Polar auxin transport"/>
</dbReference>
<dbReference type="Proteomes" id="UP000000763">
    <property type="component" value="Chromosome 1"/>
</dbReference>
<dbReference type="Proteomes" id="UP000007752">
    <property type="component" value="Chromosome 1"/>
</dbReference>
<dbReference type="Proteomes" id="UP000059680">
    <property type="component" value="Chromosome 1"/>
</dbReference>
<dbReference type="GO" id="GO:0009921">
    <property type="term" value="C:auxin efflux carrier complex"/>
    <property type="evidence" value="ECO:0000314"/>
    <property type="project" value="UniProtKB"/>
</dbReference>
<dbReference type="GO" id="GO:0005783">
    <property type="term" value="C:endoplasmic reticulum"/>
    <property type="evidence" value="ECO:0000318"/>
    <property type="project" value="GO_Central"/>
</dbReference>
<dbReference type="GO" id="GO:0005886">
    <property type="term" value="C:plasma membrane"/>
    <property type="evidence" value="ECO:0000318"/>
    <property type="project" value="GO_Central"/>
</dbReference>
<dbReference type="GO" id="GO:0010329">
    <property type="term" value="F:auxin efflux transmembrane transporter activity"/>
    <property type="evidence" value="ECO:0000250"/>
    <property type="project" value="UniProtKB"/>
</dbReference>
<dbReference type="GO" id="GO:0042802">
    <property type="term" value="F:identical protein binding"/>
    <property type="evidence" value="ECO:0000250"/>
    <property type="project" value="UniProtKB"/>
</dbReference>
<dbReference type="GO" id="GO:0042803">
    <property type="term" value="F:protein homodimerization activity"/>
    <property type="evidence" value="ECO:0000250"/>
    <property type="project" value="UniProtKB"/>
</dbReference>
<dbReference type="GO" id="GO:0010315">
    <property type="term" value="P:auxin export across the plasma membrane"/>
    <property type="evidence" value="ECO:0000250"/>
    <property type="project" value="UniProtKB"/>
</dbReference>
<dbReference type="GO" id="GO:0009926">
    <property type="term" value="P:auxin polar transport"/>
    <property type="evidence" value="ECO:0000315"/>
    <property type="project" value="UniProtKB"/>
</dbReference>
<dbReference type="GO" id="GO:0009734">
    <property type="term" value="P:auxin-activated signaling pathway"/>
    <property type="evidence" value="ECO:0007669"/>
    <property type="project" value="UniProtKB-KW"/>
</dbReference>
<dbReference type="InterPro" id="IPR014024">
    <property type="entry name" value="Auxin_eff_plant"/>
</dbReference>
<dbReference type="InterPro" id="IPR051107">
    <property type="entry name" value="Auxin_Efflux_Carrier"/>
</dbReference>
<dbReference type="InterPro" id="IPR004776">
    <property type="entry name" value="Mem_transp_PIN-like"/>
</dbReference>
<dbReference type="NCBIfam" id="TIGR00946">
    <property type="entry name" value="2a69"/>
    <property type="match status" value="1"/>
</dbReference>
<dbReference type="PANTHER" id="PTHR31752">
    <property type="entry name" value="AUXIN EFFLUX CARRIER COMPONENT 1B-RELATED"/>
    <property type="match status" value="1"/>
</dbReference>
<dbReference type="PANTHER" id="PTHR31752:SF72">
    <property type="entry name" value="AUXIN EFFLUX CARRIER COMPONENT 3A"/>
    <property type="match status" value="1"/>
</dbReference>
<dbReference type="Pfam" id="PF03547">
    <property type="entry name" value="Mem_trans"/>
    <property type="match status" value="1"/>
</dbReference>
<evidence type="ECO:0000250" key="1">
    <source>
        <dbReference type="UniProtKB" id="Q9C6B8"/>
    </source>
</evidence>
<evidence type="ECO:0000250" key="2">
    <source>
        <dbReference type="UniProtKB" id="Q9LFP6"/>
    </source>
</evidence>
<evidence type="ECO:0000255" key="3"/>
<evidence type="ECO:0000256" key="4">
    <source>
        <dbReference type="SAM" id="MobiDB-lite"/>
    </source>
</evidence>
<evidence type="ECO:0000269" key="5">
    <source>
    </source>
</evidence>
<evidence type="ECO:0000269" key="6">
    <source>
    </source>
</evidence>
<evidence type="ECO:0000303" key="7">
    <source>
    </source>
</evidence>
<evidence type="ECO:0000303" key="8">
    <source>
    </source>
</evidence>
<evidence type="ECO:0000303" key="9">
    <source>
    </source>
</evidence>
<evidence type="ECO:0000303" key="10">
    <source>
    </source>
</evidence>
<evidence type="ECO:0000305" key="11"/>
<evidence type="ECO:0000312" key="12">
    <source>
        <dbReference type="EMBL" id="BAD68753.1"/>
    </source>
</evidence>
<evidence type="ECO:0000312" key="13">
    <source>
        <dbReference type="EMBL" id="BAD68754.1"/>
    </source>
</evidence>
<evidence type="ECO:0000312" key="14">
    <source>
        <dbReference type="EMBL" id="BAS73380.1"/>
    </source>
</evidence>
<evidence type="ECO:0000312" key="15">
    <source>
        <dbReference type="EMBL" id="EEE55070.1"/>
    </source>
</evidence>
<keyword id="KW-0025">Alternative splicing</keyword>
<keyword id="KW-0927">Auxin signaling pathway</keyword>
<keyword id="KW-1003">Cell membrane</keyword>
<keyword id="KW-0472">Membrane</keyword>
<keyword id="KW-1185">Reference proteome</keyword>
<keyword id="KW-0346">Stress response</keyword>
<keyword id="KW-0812">Transmembrane</keyword>
<keyword id="KW-1133">Transmembrane helix</keyword>
<keyword id="KW-0813">Transport</keyword>
<organism>
    <name type="scientific">Oryza sativa subsp. japonica</name>
    <name type="common">Rice</name>
    <dbReference type="NCBI Taxonomy" id="39947"/>
    <lineage>
        <taxon>Eukaryota</taxon>
        <taxon>Viridiplantae</taxon>
        <taxon>Streptophyta</taxon>
        <taxon>Embryophyta</taxon>
        <taxon>Tracheophyta</taxon>
        <taxon>Spermatophyta</taxon>
        <taxon>Magnoliopsida</taxon>
        <taxon>Liliopsida</taxon>
        <taxon>Poales</taxon>
        <taxon>Poaceae</taxon>
        <taxon>BOP clade</taxon>
        <taxon>Oryzoideae</taxon>
        <taxon>Oryzeae</taxon>
        <taxon>Oryzinae</taxon>
        <taxon>Oryza</taxon>
        <taxon>Oryza sativa</taxon>
    </lineage>
</organism>
<sequence>MISGHDFYTVMAAVVPLYVAMFLAYGSVRWWGIFTPDQCSGINRFVAIFAVPLLSFHFISTNDPYAMNLRFLAADTLQKLLVLAGLAAWSRLPSRTGAPRLDWSITLFSLSTLPNTLVMGIPLLIAMYGPYSGSLMVQIVVLQCIIWYTLMLFLFEFRAARMLIADQFPDTAASIVSLHVDPDVVSLEGGHAETEAEVAADGRLHVTVRRSSVSRRSLLVTPRPSNLTGAEIYSLSSSRNPTPRGSNFNHADFFAMVGGGPPPPTPAAVRGSSFGASELYSLQSSRGPTPRQSNFDEHSARPPKPPATTTGALNHDAKELHMFVWSSSASPVSEVSGLPVFSGGGGGGALDVGAKEIHMVIPADLPQNNGSGKEHEEYGAVALGGGGGGENFSFGGGKTVDGAEAVDEEAALPDGLTKMGSSSTAELHPKVVDVDGPNAGGGAAGAGQYQMPPASVMTRLILIMVWRKLIRNPNTYSSLLGLAWSLVAFRWHVSMPAIVEKSISILSDAGLGMAMFSLGLFMALQPSIIACGKSAAVVSMAVRFLAGPAVMAAASIAIGLRGTLLHVAIVQAALPQGIVPFVFAKEYNVHPAILSTAVIFGMLIALPITLLYYILLGL</sequence>
<gene>
    <name evidence="8" type="primary">PIN3A</name>
    <name evidence="14" type="ordered locus">Os01g0643300</name>
    <name evidence="11" type="ordered locus">LOC_Os01g45550</name>
    <name evidence="15" type="ORF">OsJ_02793</name>
    <name evidence="13" type="ORF">P0510C12.26-1</name>
    <name evidence="12" type="ORF">P0510C12.26-2</name>
</gene>
<comment type="function">
    <text evidence="6">Acts as a component of the auxin efflux carrier. Involved in the polar auxin transport which may regulate crown root development and response to water stress.</text>
</comment>
<comment type="subunit">
    <text evidence="1">Homodimer.</text>
</comment>
<comment type="subcellular location">
    <subcellularLocation>
        <location evidence="6">Cell membrane</location>
        <topology evidence="3">Multi-pass membrane protein</topology>
    </subcellularLocation>
</comment>
<comment type="alternative products">
    <event type="alternative splicing"/>
    <isoform>
        <id>Q5VP70-1</id>
        <name>1</name>
        <sequence type="displayed"/>
    </isoform>
    <isoform>
        <id>Q5VP70-2</id>
        <name>2</name>
        <sequence type="described" ref="VSP_017010"/>
    </isoform>
</comment>
<comment type="tissue specificity">
    <text evidence="5 6">Expressed in coleoptiles, roots, vascular bundles of leaves, shoots, lamina joints and vascular bundles of the lemma and filament (PubMed:22882529). Expressed in stem bases, stems, leaves and young panicles (PubMed:19825657).</text>
</comment>
<comment type="induction">
    <text evidence="6">By auxin and osmotic stress. Down-regulated by 1-N-naphthylphthalamic acid (NPA), an auxin efflux inhibitor.</text>
</comment>
<comment type="miscellaneous">
    <text evidence="6">Seedlings silencing PIN3A display abnormal crown root development. Seedling over-expressing PIN3A exhibit better shoot growth, longer roots and a greater number of adventitious roots than the wild-type when grown on PEG-induced osmotic stress.</text>
</comment>
<comment type="similarity">
    <text evidence="11">Belongs to the auxin efflux carrier (TC 2.A.69.1) family.</text>
</comment>
<protein>
    <recommendedName>
        <fullName evidence="11">Auxin efflux carrier component 3a</fullName>
        <shortName evidence="8">OsPIN3a</shortName>
    </recommendedName>
    <alternativeName>
        <fullName evidence="9">OSPIN10a</fullName>
    </alternativeName>
    <alternativeName>
        <fullName evidence="10">OsPIN3t</fullName>
    </alternativeName>
</protein>
<accession>Q5VP70</accession>
<accession>D5A7J0</accession>
<accession>Q0JKX2</accession>
<accession>Q5VP71</accession>